<feature type="chain" id="PRO_1000067964" description="Small ribosomal subunit protein uS14B">
    <location>
        <begin position="1"/>
        <end position="61"/>
    </location>
</feature>
<feature type="binding site" evidence="1">
    <location>
        <position position="24"/>
    </location>
    <ligand>
        <name>Zn(2+)</name>
        <dbReference type="ChEBI" id="CHEBI:29105"/>
    </ligand>
</feature>
<feature type="binding site" evidence="1">
    <location>
        <position position="27"/>
    </location>
    <ligand>
        <name>Zn(2+)</name>
        <dbReference type="ChEBI" id="CHEBI:29105"/>
    </ligand>
</feature>
<feature type="binding site" evidence="1">
    <location>
        <position position="40"/>
    </location>
    <ligand>
        <name>Zn(2+)</name>
        <dbReference type="ChEBI" id="CHEBI:29105"/>
    </ligand>
</feature>
<feature type="binding site" evidence="1">
    <location>
        <position position="43"/>
    </location>
    <ligand>
        <name>Zn(2+)</name>
        <dbReference type="ChEBI" id="CHEBI:29105"/>
    </ligand>
</feature>
<gene>
    <name evidence="1" type="primary">rpsZ</name>
    <name evidence="1" type="synonym">rpsN</name>
    <name type="ordered locus">SACE_6823</name>
</gene>
<proteinExistence type="inferred from homology"/>
<reference key="1">
    <citation type="journal article" date="2007" name="Nat. Biotechnol.">
        <title>Complete genome sequence of the erythromycin-producing bacterium Saccharopolyspora erythraea NRRL23338.</title>
        <authorList>
            <person name="Oliynyk M."/>
            <person name="Samborskyy M."/>
            <person name="Lester J.B."/>
            <person name="Mironenko T."/>
            <person name="Scott N."/>
            <person name="Dickens S."/>
            <person name="Haydock S.F."/>
            <person name="Leadlay P.F."/>
        </authorList>
    </citation>
    <scope>NUCLEOTIDE SEQUENCE [LARGE SCALE GENOMIC DNA]</scope>
    <source>
        <strain>ATCC 11635 / DSM 40517 / JCM 4748 / NBRC 13426 / NCIMB 8594 / NRRL 2338</strain>
    </source>
</reference>
<protein>
    <recommendedName>
        <fullName evidence="1">Small ribosomal subunit protein uS14B</fullName>
    </recommendedName>
    <alternativeName>
        <fullName evidence="2">30S ribosomal protein S14 type Z</fullName>
    </alternativeName>
</protein>
<organism>
    <name type="scientific">Saccharopolyspora erythraea (strain ATCC 11635 / DSM 40517 / JCM 4748 / NBRC 13426 / NCIMB 8594 / NRRL 2338)</name>
    <dbReference type="NCBI Taxonomy" id="405948"/>
    <lineage>
        <taxon>Bacteria</taxon>
        <taxon>Bacillati</taxon>
        <taxon>Actinomycetota</taxon>
        <taxon>Actinomycetes</taxon>
        <taxon>Pseudonocardiales</taxon>
        <taxon>Pseudonocardiaceae</taxon>
        <taxon>Saccharopolyspora</taxon>
    </lineage>
</organism>
<sequence length="61" mass="6916">MAKKALINKAAAKPKFKVRGYTRCQRCGRPRSVFRKFGLCRVCFREMAHAGELPGVSKSSW</sequence>
<name>RS14Z_SACEN</name>
<dbReference type="EMBL" id="AM420293">
    <property type="protein sequence ID" value="CAM05987.1"/>
    <property type="molecule type" value="Genomic_DNA"/>
</dbReference>
<dbReference type="RefSeq" id="WP_009948644.1">
    <property type="nucleotide sequence ID" value="NC_009142.1"/>
</dbReference>
<dbReference type="SMR" id="A4FPL2"/>
<dbReference type="STRING" id="405948.SACE_6823"/>
<dbReference type="KEGG" id="sen:SACE_6823"/>
<dbReference type="eggNOG" id="COG0199">
    <property type="taxonomic scope" value="Bacteria"/>
</dbReference>
<dbReference type="HOGENOM" id="CLU_139869_3_0_11"/>
<dbReference type="OrthoDB" id="9810484at2"/>
<dbReference type="Proteomes" id="UP000006728">
    <property type="component" value="Chromosome"/>
</dbReference>
<dbReference type="GO" id="GO:0005737">
    <property type="term" value="C:cytoplasm"/>
    <property type="evidence" value="ECO:0007669"/>
    <property type="project" value="UniProtKB-ARBA"/>
</dbReference>
<dbReference type="GO" id="GO:0015935">
    <property type="term" value="C:small ribosomal subunit"/>
    <property type="evidence" value="ECO:0007669"/>
    <property type="project" value="TreeGrafter"/>
</dbReference>
<dbReference type="GO" id="GO:0019843">
    <property type="term" value="F:rRNA binding"/>
    <property type="evidence" value="ECO:0007669"/>
    <property type="project" value="UniProtKB-UniRule"/>
</dbReference>
<dbReference type="GO" id="GO:0003735">
    <property type="term" value="F:structural constituent of ribosome"/>
    <property type="evidence" value="ECO:0007669"/>
    <property type="project" value="InterPro"/>
</dbReference>
<dbReference type="GO" id="GO:0008270">
    <property type="term" value="F:zinc ion binding"/>
    <property type="evidence" value="ECO:0007669"/>
    <property type="project" value="UniProtKB-UniRule"/>
</dbReference>
<dbReference type="GO" id="GO:0006412">
    <property type="term" value="P:translation"/>
    <property type="evidence" value="ECO:0007669"/>
    <property type="project" value="UniProtKB-UniRule"/>
</dbReference>
<dbReference type="FunFam" id="4.10.830.10:FF:000001">
    <property type="entry name" value="30S ribosomal protein S14 type Z"/>
    <property type="match status" value="1"/>
</dbReference>
<dbReference type="Gene3D" id="4.10.830.10">
    <property type="entry name" value="30s Ribosomal Protein S14, Chain N"/>
    <property type="match status" value="1"/>
</dbReference>
<dbReference type="HAMAP" id="MF_01364_B">
    <property type="entry name" value="Ribosomal_uS14_2_B"/>
    <property type="match status" value="1"/>
</dbReference>
<dbReference type="InterPro" id="IPR001209">
    <property type="entry name" value="Ribosomal_uS14"/>
</dbReference>
<dbReference type="InterPro" id="IPR023053">
    <property type="entry name" value="Ribosomal_uS14_bact"/>
</dbReference>
<dbReference type="InterPro" id="IPR018271">
    <property type="entry name" value="Ribosomal_uS14_CS"/>
</dbReference>
<dbReference type="InterPro" id="IPR043140">
    <property type="entry name" value="Ribosomal_uS14_sf"/>
</dbReference>
<dbReference type="NCBIfam" id="NF005974">
    <property type="entry name" value="PRK08061.1"/>
    <property type="match status" value="1"/>
</dbReference>
<dbReference type="PANTHER" id="PTHR19836">
    <property type="entry name" value="30S RIBOSOMAL PROTEIN S14"/>
    <property type="match status" value="1"/>
</dbReference>
<dbReference type="PANTHER" id="PTHR19836:SF19">
    <property type="entry name" value="SMALL RIBOSOMAL SUBUNIT PROTEIN US14M"/>
    <property type="match status" value="1"/>
</dbReference>
<dbReference type="Pfam" id="PF00253">
    <property type="entry name" value="Ribosomal_S14"/>
    <property type="match status" value="1"/>
</dbReference>
<dbReference type="SUPFAM" id="SSF57716">
    <property type="entry name" value="Glucocorticoid receptor-like (DNA-binding domain)"/>
    <property type="match status" value="1"/>
</dbReference>
<dbReference type="PROSITE" id="PS00527">
    <property type="entry name" value="RIBOSOMAL_S14"/>
    <property type="match status" value="1"/>
</dbReference>
<comment type="function">
    <text evidence="1">Binds 16S rRNA, required for the assembly of 30S particles and may also be responsible for determining the conformation of the 16S rRNA at the A site.</text>
</comment>
<comment type="cofactor">
    <cofactor evidence="1">
        <name>Zn(2+)</name>
        <dbReference type="ChEBI" id="CHEBI:29105"/>
    </cofactor>
    <text evidence="1">Binds 1 zinc ion per subunit.</text>
</comment>
<comment type="subunit">
    <text evidence="1">Part of the 30S ribosomal subunit. Contacts proteins S3 and S10.</text>
</comment>
<comment type="similarity">
    <text evidence="1">Belongs to the universal ribosomal protein uS14 family. Zinc-binding uS14 subfamily.</text>
</comment>
<accession>A4FPL2</accession>
<keyword id="KW-0479">Metal-binding</keyword>
<keyword id="KW-1185">Reference proteome</keyword>
<keyword id="KW-0687">Ribonucleoprotein</keyword>
<keyword id="KW-0689">Ribosomal protein</keyword>
<keyword id="KW-0694">RNA-binding</keyword>
<keyword id="KW-0699">rRNA-binding</keyword>
<keyword id="KW-0862">Zinc</keyword>
<evidence type="ECO:0000255" key="1">
    <source>
        <dbReference type="HAMAP-Rule" id="MF_01364"/>
    </source>
</evidence>
<evidence type="ECO:0000305" key="2"/>